<evidence type="ECO:0000269" key="1">
    <source>
    </source>
</evidence>
<evidence type="ECO:0000269" key="2">
    <source>
    </source>
</evidence>
<evidence type="ECO:0000269" key="3">
    <source>
    </source>
</evidence>
<evidence type="ECO:0000269" key="4">
    <source>
    </source>
</evidence>
<evidence type="ECO:0000269" key="5">
    <source>
    </source>
</evidence>
<evidence type="ECO:0000269" key="6">
    <source>
    </source>
</evidence>
<evidence type="ECO:0000269" key="7">
    <source>
    </source>
</evidence>
<evidence type="ECO:0000303" key="8">
    <source>
    </source>
</evidence>
<evidence type="ECO:0000303" key="9">
    <source>
    </source>
</evidence>
<evidence type="ECO:0000305" key="10"/>
<evidence type="ECO:0000312" key="11">
    <source>
        <dbReference type="Araport" id="AT1G05180"/>
    </source>
</evidence>
<evidence type="ECO:0000312" key="12">
    <source>
        <dbReference type="EMBL" id="AAB71460.1"/>
    </source>
</evidence>
<dbReference type="EMBL" id="L13922">
    <property type="protein sequence ID" value="AAB59348.1"/>
    <property type="molecule type" value="mRNA"/>
</dbReference>
<dbReference type="EMBL" id="AC000098">
    <property type="protein sequence ID" value="AAB71460.1"/>
    <property type="molecule type" value="Genomic_DNA"/>
</dbReference>
<dbReference type="EMBL" id="CP002684">
    <property type="protein sequence ID" value="AEE27800.1"/>
    <property type="molecule type" value="Genomic_DNA"/>
</dbReference>
<dbReference type="EMBL" id="AY050379">
    <property type="protein sequence ID" value="AAK91397.1"/>
    <property type="molecule type" value="mRNA"/>
</dbReference>
<dbReference type="PIR" id="S35071">
    <property type="entry name" value="S35071"/>
</dbReference>
<dbReference type="RefSeq" id="NP_172010.1">
    <molecule id="P42744-1"/>
    <property type="nucleotide sequence ID" value="NM_100396.4"/>
</dbReference>
<dbReference type="SMR" id="P42744"/>
<dbReference type="BioGRID" id="24521">
    <property type="interactions" value="10"/>
</dbReference>
<dbReference type="FunCoup" id="P42744">
    <property type="interactions" value="4900"/>
</dbReference>
<dbReference type="IntAct" id="P42744">
    <property type="interactions" value="1"/>
</dbReference>
<dbReference type="STRING" id="3702.P42744"/>
<dbReference type="GlyGen" id="P42744">
    <property type="glycosylation" value="1 site"/>
</dbReference>
<dbReference type="iPTMnet" id="P42744"/>
<dbReference type="PaxDb" id="3702-AT1G05180.1"/>
<dbReference type="ProteomicsDB" id="240941">
    <molecule id="P42744-1"/>
</dbReference>
<dbReference type="EnsemblPlants" id="AT1G05180.1">
    <molecule id="P42744-1"/>
    <property type="protein sequence ID" value="AT1G05180.1"/>
    <property type="gene ID" value="AT1G05180"/>
</dbReference>
<dbReference type="GeneID" id="839286"/>
<dbReference type="Gramene" id="AT1G05180.1">
    <molecule id="P42744-1"/>
    <property type="protein sequence ID" value="AT1G05180.1"/>
    <property type="gene ID" value="AT1G05180"/>
</dbReference>
<dbReference type="KEGG" id="ath:AT1G05180"/>
<dbReference type="Araport" id="AT1G05180"/>
<dbReference type="TAIR" id="AT1G05180">
    <property type="gene designation" value="AXR1"/>
</dbReference>
<dbReference type="eggNOG" id="KOG2016">
    <property type="taxonomic scope" value="Eukaryota"/>
</dbReference>
<dbReference type="HOGENOM" id="CLU_019618_2_1_1"/>
<dbReference type="InParanoid" id="P42744"/>
<dbReference type="OMA" id="KLITHQY"/>
<dbReference type="OrthoDB" id="1708823at2759"/>
<dbReference type="PhylomeDB" id="P42744"/>
<dbReference type="UniPathway" id="UPA00885"/>
<dbReference type="PRO" id="PR:P42744"/>
<dbReference type="Proteomes" id="UP000006548">
    <property type="component" value="Chromosome 1"/>
</dbReference>
<dbReference type="ExpressionAtlas" id="P42744">
    <property type="expression patterns" value="baseline and differential"/>
</dbReference>
<dbReference type="GO" id="GO:0005634">
    <property type="term" value="C:nucleus"/>
    <property type="evidence" value="ECO:0007669"/>
    <property type="project" value="UniProtKB-SubCell"/>
</dbReference>
<dbReference type="GO" id="GO:0019781">
    <property type="term" value="F:NEDD8 activating enzyme activity"/>
    <property type="evidence" value="ECO:0007669"/>
    <property type="project" value="InterPro"/>
</dbReference>
<dbReference type="GO" id="GO:0000166">
    <property type="term" value="F:nucleotide binding"/>
    <property type="evidence" value="ECO:0007669"/>
    <property type="project" value="UniProtKB-KW"/>
</dbReference>
<dbReference type="GO" id="GO:0009734">
    <property type="term" value="P:auxin-activated signaling pathway"/>
    <property type="evidence" value="ECO:0000315"/>
    <property type="project" value="TAIR"/>
</dbReference>
<dbReference type="GO" id="GO:0006281">
    <property type="term" value="P:DNA repair"/>
    <property type="evidence" value="ECO:0000315"/>
    <property type="project" value="TAIR"/>
</dbReference>
<dbReference type="GO" id="GO:0009965">
    <property type="term" value="P:leaf morphogenesis"/>
    <property type="evidence" value="ECO:0000316"/>
    <property type="project" value="TAIR"/>
</dbReference>
<dbReference type="GO" id="GO:0045116">
    <property type="term" value="P:protein neddylation"/>
    <property type="evidence" value="ECO:0007669"/>
    <property type="project" value="UniProtKB-UniPathway"/>
</dbReference>
<dbReference type="GO" id="GO:0007131">
    <property type="term" value="P:reciprocal meiotic recombination"/>
    <property type="evidence" value="ECO:0000315"/>
    <property type="project" value="UniProtKB"/>
</dbReference>
<dbReference type="GO" id="GO:0009735">
    <property type="term" value="P:response to cytokinin"/>
    <property type="evidence" value="ECO:0000316"/>
    <property type="project" value="TAIR"/>
</dbReference>
<dbReference type="GO" id="GO:0009414">
    <property type="term" value="P:response to water deprivation"/>
    <property type="evidence" value="ECO:0000315"/>
    <property type="project" value="TAIR"/>
</dbReference>
<dbReference type="CDD" id="cd01493">
    <property type="entry name" value="APPBP1_RUB"/>
    <property type="match status" value="1"/>
</dbReference>
<dbReference type="FunFam" id="3.40.50.720:FF:000263">
    <property type="entry name" value="NEDD8-activating enzyme E1 regulatory subunit"/>
    <property type="match status" value="1"/>
</dbReference>
<dbReference type="FunFam" id="3.40.50.720:FF:000337">
    <property type="entry name" value="NEDD8-activating enzyme E1 regulatory subunit"/>
    <property type="match status" value="1"/>
</dbReference>
<dbReference type="Gene3D" id="3.40.50.720">
    <property type="entry name" value="NAD(P)-binding Rossmann-like Domain"/>
    <property type="match status" value="2"/>
</dbReference>
<dbReference type="InterPro" id="IPR030667">
    <property type="entry name" value="APP-BP1"/>
</dbReference>
<dbReference type="InterPro" id="IPR045886">
    <property type="entry name" value="ThiF/MoeB/HesA"/>
</dbReference>
<dbReference type="InterPro" id="IPR000594">
    <property type="entry name" value="ThiF_NAD_FAD-bd"/>
</dbReference>
<dbReference type="InterPro" id="IPR035985">
    <property type="entry name" value="Ubiquitin-activating_enz"/>
</dbReference>
<dbReference type="PANTHER" id="PTHR10953:SF29">
    <property type="entry name" value="NEDD8-ACTIVATING ENZYME E1 REGULATORY SUBUNIT"/>
    <property type="match status" value="1"/>
</dbReference>
<dbReference type="PANTHER" id="PTHR10953">
    <property type="entry name" value="UBIQUITIN-ACTIVATING ENZYME E1"/>
    <property type="match status" value="1"/>
</dbReference>
<dbReference type="Pfam" id="PF00899">
    <property type="entry name" value="ThiF"/>
    <property type="match status" value="1"/>
</dbReference>
<dbReference type="PIRSF" id="PIRSF039099">
    <property type="entry name" value="APP-BP1"/>
    <property type="match status" value="1"/>
</dbReference>
<dbReference type="SUPFAM" id="SSF69572">
    <property type="entry name" value="Activating enzymes of the ubiquitin-like proteins"/>
    <property type="match status" value="1"/>
</dbReference>
<keyword id="KW-0025">Alternative splicing</keyword>
<keyword id="KW-0927">Auxin signaling pathway</keyword>
<keyword id="KW-0547">Nucleotide-binding</keyword>
<keyword id="KW-0539">Nucleus</keyword>
<keyword id="KW-1185">Reference proteome</keyword>
<keyword id="KW-0833">Ubl conjugation pathway</keyword>
<protein>
    <recommendedName>
        <fullName evidence="10">NEDD8-activating enzyme E1 regulatory subunit AXR1</fullName>
    </recommendedName>
    <alternativeName>
        <fullName evidence="9">Auxin-resistance protein AXR1</fullName>
    </alternativeName>
    <alternativeName>
        <fullName evidence="8">Protein AUXIN-RESISTANT 1</fullName>
    </alternativeName>
</protein>
<name>AXR1_ARATH</name>
<sequence length="540" mass="60035">MQAVKRSRRHVEEEPTMVEPKTKYDRQLRIWGEVGQAALEEASICLLNCGPTGSEALKNLVLGGVGSITVVDGSKVQFGDLGNNFMVDAKSVGQSKAKSVCAFLQELNDSVNAKFIEENPDTLITTNPSFFSQFTLVIATQLVEDSMLKLDRICRDANVKLVLVRSYGLAGFVRISVKEHPIIDSKPDHFLDDLRLNNPWPELKSFVETIDLNVSEPAAAHKHIPYVVILVKMAEEWAQSHSGNLPSTREEKKEFKDLVKSKMVSTDEDNYKEAIEAAFKVFAPRGISSEVQKLINDSCAEVNSNSSAFWVMVAALKEFVLNEGGGEAPLEGSIPDMTSSTEHYINLQKIYLAKAEADFLVIEERVKNILKKIGRDPSSIPKPTIKSFCKNARKLKLCRYRMVEDEFRNPSVTEIQKYLADEDYSGAMGFYILLRAADRFAANYNKFPGQFDGGMDEDISRLKTTALSLLTDLGCNGSVLPDDLIHEMCRFGASEIHVVSAFVGGIASQEVIKLVTKQFVPMLGTYIFNGIDHKSQLLKL</sequence>
<feature type="chain" id="PRO_0000194960" description="NEDD8-activating enzyme E1 regulatory subunit AXR1">
    <location>
        <begin position="1"/>
        <end position="540"/>
    </location>
</feature>
<feature type="mutagenesis site" description="In axr1-3; auxin-resistant." evidence="6">
    <original>C</original>
    <variation>Y</variation>
    <location>
        <position position="154"/>
    </location>
</feature>
<reference key="1">
    <citation type="journal article" date="1993" name="Nature">
        <title>Arabidopsis auxin-resistance gene AXR1 encodes a protein related to ubiquitin-activating enzyme E1.</title>
        <authorList>
            <person name="Leyser H.M.O."/>
            <person name="Lincoln C.A."/>
            <person name="Timpte C."/>
            <person name="Lammer D."/>
            <person name="Turner J."/>
            <person name="Estelle M."/>
        </authorList>
    </citation>
    <scope>NUCLEOTIDE SEQUENCE [MRNA]</scope>
    <scope>FUNCTION</scope>
    <scope>MUTANT AXR1-3</scope>
    <source>
        <strain>cv. Columbia</strain>
    </source>
</reference>
<reference key="2">
    <citation type="journal article" date="2000" name="Nature">
        <title>Sequence and analysis of chromosome 1 of the plant Arabidopsis thaliana.</title>
        <authorList>
            <person name="Theologis A."/>
            <person name="Ecker J.R."/>
            <person name="Palm C.J."/>
            <person name="Federspiel N.A."/>
            <person name="Kaul S."/>
            <person name="White O."/>
            <person name="Alonso J."/>
            <person name="Altafi H."/>
            <person name="Araujo R."/>
            <person name="Bowman C.L."/>
            <person name="Brooks S.Y."/>
            <person name="Buehler E."/>
            <person name="Chan A."/>
            <person name="Chao Q."/>
            <person name="Chen H."/>
            <person name="Cheuk R.F."/>
            <person name="Chin C.W."/>
            <person name="Chung M.K."/>
            <person name="Conn L."/>
            <person name="Conway A.B."/>
            <person name="Conway A.R."/>
            <person name="Creasy T.H."/>
            <person name="Dewar K."/>
            <person name="Dunn P."/>
            <person name="Etgu P."/>
            <person name="Feldblyum T.V."/>
            <person name="Feng J.-D."/>
            <person name="Fong B."/>
            <person name="Fujii C.Y."/>
            <person name="Gill J.E."/>
            <person name="Goldsmith A.D."/>
            <person name="Haas B."/>
            <person name="Hansen N.F."/>
            <person name="Hughes B."/>
            <person name="Huizar L."/>
            <person name="Hunter J.L."/>
            <person name="Jenkins J."/>
            <person name="Johnson-Hopson C."/>
            <person name="Khan S."/>
            <person name="Khaykin E."/>
            <person name="Kim C.J."/>
            <person name="Koo H.L."/>
            <person name="Kremenetskaia I."/>
            <person name="Kurtz D.B."/>
            <person name="Kwan A."/>
            <person name="Lam B."/>
            <person name="Langin-Hooper S."/>
            <person name="Lee A."/>
            <person name="Lee J.M."/>
            <person name="Lenz C.A."/>
            <person name="Li J.H."/>
            <person name="Li Y.-P."/>
            <person name="Lin X."/>
            <person name="Liu S.X."/>
            <person name="Liu Z.A."/>
            <person name="Luros J.S."/>
            <person name="Maiti R."/>
            <person name="Marziali A."/>
            <person name="Militscher J."/>
            <person name="Miranda M."/>
            <person name="Nguyen M."/>
            <person name="Nierman W.C."/>
            <person name="Osborne B.I."/>
            <person name="Pai G."/>
            <person name="Peterson J."/>
            <person name="Pham P.K."/>
            <person name="Rizzo M."/>
            <person name="Rooney T."/>
            <person name="Rowley D."/>
            <person name="Sakano H."/>
            <person name="Salzberg S.L."/>
            <person name="Schwartz J.R."/>
            <person name="Shinn P."/>
            <person name="Southwick A.M."/>
            <person name="Sun H."/>
            <person name="Tallon L.J."/>
            <person name="Tambunga G."/>
            <person name="Toriumi M.J."/>
            <person name="Town C.D."/>
            <person name="Utterback T."/>
            <person name="Van Aken S."/>
            <person name="Vaysberg M."/>
            <person name="Vysotskaia V.S."/>
            <person name="Walker M."/>
            <person name="Wu D."/>
            <person name="Yu G."/>
            <person name="Fraser C.M."/>
            <person name="Venter J.C."/>
            <person name="Davis R.W."/>
        </authorList>
    </citation>
    <scope>NUCLEOTIDE SEQUENCE [LARGE SCALE GENOMIC DNA]</scope>
    <source>
        <strain>cv. Columbia</strain>
    </source>
</reference>
<reference key="3">
    <citation type="journal article" date="2017" name="Plant J.">
        <title>Araport11: a complete reannotation of the Arabidopsis thaliana reference genome.</title>
        <authorList>
            <person name="Cheng C.Y."/>
            <person name="Krishnakumar V."/>
            <person name="Chan A.P."/>
            <person name="Thibaud-Nissen F."/>
            <person name="Schobel S."/>
            <person name="Town C.D."/>
        </authorList>
    </citation>
    <scope>GENOME REANNOTATION</scope>
    <source>
        <strain>cv. Columbia</strain>
    </source>
</reference>
<reference key="4">
    <citation type="journal article" date="2003" name="Science">
        <title>Empirical analysis of transcriptional activity in the Arabidopsis genome.</title>
        <authorList>
            <person name="Yamada K."/>
            <person name="Lim J."/>
            <person name="Dale J.M."/>
            <person name="Chen H."/>
            <person name="Shinn P."/>
            <person name="Palm C.J."/>
            <person name="Southwick A.M."/>
            <person name="Wu H.C."/>
            <person name="Kim C.J."/>
            <person name="Nguyen M."/>
            <person name="Pham P.K."/>
            <person name="Cheuk R.F."/>
            <person name="Karlin-Newmann G."/>
            <person name="Liu S.X."/>
            <person name="Lam B."/>
            <person name="Sakano H."/>
            <person name="Wu T."/>
            <person name="Yu G."/>
            <person name="Miranda M."/>
            <person name="Quach H.L."/>
            <person name="Tripp M."/>
            <person name="Chang C.H."/>
            <person name="Lee J.M."/>
            <person name="Toriumi M.J."/>
            <person name="Chan M.M."/>
            <person name="Tang C.C."/>
            <person name="Onodera C.S."/>
            <person name="Deng J.M."/>
            <person name="Akiyama K."/>
            <person name="Ansari Y."/>
            <person name="Arakawa T."/>
            <person name="Banh J."/>
            <person name="Banno F."/>
            <person name="Bowser L."/>
            <person name="Brooks S.Y."/>
            <person name="Carninci P."/>
            <person name="Chao Q."/>
            <person name="Choy N."/>
            <person name="Enju A."/>
            <person name="Goldsmith A.D."/>
            <person name="Gurjal M."/>
            <person name="Hansen N.F."/>
            <person name="Hayashizaki Y."/>
            <person name="Johnson-Hopson C."/>
            <person name="Hsuan V.W."/>
            <person name="Iida K."/>
            <person name="Karnes M."/>
            <person name="Khan S."/>
            <person name="Koesema E."/>
            <person name="Ishida J."/>
            <person name="Jiang P.X."/>
            <person name="Jones T."/>
            <person name="Kawai J."/>
            <person name="Kamiya A."/>
            <person name="Meyers C."/>
            <person name="Nakajima M."/>
            <person name="Narusaka M."/>
            <person name="Seki M."/>
            <person name="Sakurai T."/>
            <person name="Satou M."/>
            <person name="Tamse R."/>
            <person name="Vaysberg M."/>
            <person name="Wallender E.K."/>
            <person name="Wong C."/>
            <person name="Yamamura Y."/>
            <person name="Yuan S."/>
            <person name="Shinozaki K."/>
            <person name="Davis R.W."/>
            <person name="Theologis A."/>
            <person name="Ecker J.R."/>
        </authorList>
    </citation>
    <scope>NUCLEOTIDE SEQUENCE [LARGE SCALE MRNA]</scope>
    <source>
        <strain>cv. Columbia</strain>
    </source>
</reference>
<reference key="5">
    <citation type="journal article" date="1998" name="Science">
        <title>The ubiquitin-related protein RUB1 and auxin response in Arabidopsis.</title>
        <authorList>
            <person name="del Pozo J.C."/>
            <person name="Timpte C."/>
            <person name="Tan S."/>
            <person name="Callis J."/>
            <person name="Estelle M."/>
        </authorList>
    </citation>
    <scope>SUBCELLULAR LOCATION</scope>
    <scope>INTERACTION WITH ECR1 AND RUB1</scope>
</reference>
<reference key="6">
    <citation type="journal article" date="2002" name="Plant Cell">
        <title>AXR1-ECR1-dependent conjugation of RUB1 to the Arabidopsis Cullin AtCUL1 is required for auxin response.</title>
        <authorList>
            <person name="del Pozo J.C."/>
            <person name="Dharmasiri S."/>
            <person name="Hellmann H."/>
            <person name="Walker L."/>
            <person name="Gray W.M."/>
            <person name="Estelle M."/>
        </authorList>
    </citation>
    <scope>TISSUE SPECIFICITY</scope>
    <scope>DEVELOPMENTAL STAGE</scope>
</reference>
<reference key="7">
    <citation type="journal article" date="2002" name="Plant Cell">
        <title>Multiple ubiquitin ligase-mediated processes require COP9 signalosome and AXR1 function.</title>
        <authorList>
            <person name="Schwechheimer C."/>
            <person name="Serino G."/>
            <person name="Deng X.W."/>
        </authorList>
    </citation>
    <scope>FUNCTION</scope>
</reference>
<reference key="8">
    <citation type="journal article" date="2007" name="Plant J.">
        <title>AXL and AXR1 have redundant functions in RUB conjugation and growth and development in Arabidopsis.</title>
        <authorList>
            <person name="Dharmasiri N."/>
            <person name="Dharmasiri S."/>
            <person name="Weijers D."/>
            <person name="Karunarathna N."/>
            <person name="Jurgens G."/>
            <person name="Estelle M."/>
        </authorList>
    </citation>
    <scope>FUNCTION</scope>
</reference>
<reference key="9">
    <citation type="journal article" date="2011" name="Plant Mol. Biol.">
        <title>AXR1-ECR1 and AXL1-ECR1 heterodimeric RUB-activating enzymes diverge in function in Arabidopsis thaliana.</title>
        <authorList>
            <person name="Hotton S.K."/>
            <person name="Eigenheer R.A."/>
            <person name="Castro M.F."/>
            <person name="Bostick M."/>
            <person name="Callis J."/>
        </authorList>
    </citation>
    <scope>FUNCTION</scope>
    <scope>INTERACTION WITH ECR1 AND RUB1</scope>
</reference>
<reference key="10">
    <citation type="journal article" date="2014" name="PLoS Biol.">
        <title>Crossover localisation is regulated by the neddylation posttranslational regulatory pathway.</title>
        <authorList>
            <person name="Jahns M.T."/>
            <person name="Vezon D."/>
            <person name="Chambon A."/>
            <person name="Pereira L."/>
            <person name="Falque M."/>
            <person name="Martin O.C."/>
            <person name="Chelysheva L."/>
            <person name="Grelon M."/>
        </authorList>
    </citation>
    <scope>FUNCTION</scope>
    <scope>DISRUPTION PHENOTYPE</scope>
    <source>
        <strain>cv. Columbia</strain>
        <strain>cv. Wassilewskija</strain>
    </source>
</reference>
<gene>
    <name evidence="9" type="primary">AXR1</name>
    <name evidence="11" type="ordered locus">At1g05180</name>
    <name evidence="12" type="ORF">YUP8H12.21</name>
</gene>
<proteinExistence type="evidence at protein level"/>
<comment type="function">
    <text evidence="2 3 4 5 6">Regulatory subunit of the dimeric ECR1-AXR1 E1 enzyme. E1 activates RUB1/NEDD8 by first adenylating its C-terminal glycine residue with ATP, thereafter linking this residue to the side chain of the catalytic cysteine, yielding a RUB1-ECR1 thioester and free AMP. E1 finally transfers RUB1 to the catalytic cysteine of RCE1. Plays an important role in auxin response (PubMed:8321287). Regulates the chromosomal localization of meiotic recombination by crossovers (COs) and subsequent synapsis, probably through the activation of a CRL4 complex (PubMed:25116939). Required for E3-mediated protein degradation in response to auxin, jasmonic acid and cold stress. Required for the COP1-COP10-CSN-mediated repression of photomorphogenesis in the dark (PubMed:12368504). May function redundantly with AXL1 in the RUB conjugating pathway (PubMed:17655650). Seems not to be functionally equivalent to AXL1 in vivo (PubMed:21311953).</text>
</comment>
<comment type="pathway">
    <text>Protein modification; protein neddylation.</text>
</comment>
<comment type="subunit">
    <text evidence="4 7">Heterodimer of ECR1 and AXR1. The complex binds to RUB1/NEDD8 and RCE1.</text>
</comment>
<comment type="subcellular location">
    <subcellularLocation>
        <location evidence="7">Nucleus</location>
    </subcellularLocation>
</comment>
<comment type="alternative products">
    <event type="alternative splicing"/>
    <isoform>
        <id>P42744-1</id>
        <name>1</name>
        <sequence type="displayed"/>
    </isoform>
    <text>A number of isoforms are produced. According to EST sequences.</text>
</comment>
<comment type="tissue specificity">
    <text evidence="1">Expressed in shoot, root and floral meristems, in vascular tissues of cotyledons and mature leaves, and in the stele of the root. Expressed at higher levels on the lower side of an emerging root during germination and at higher levels on the underside of the apical hook.</text>
</comment>
<comment type="developmental stage">
    <text evidence="1">Expressed during ovules and embryo development and very early during the formation of lateral roots.</text>
</comment>
<comment type="disruption phenotype">
    <text evidence="5">Impaired meiotic recombination characterized by a shortage in bivalent formation due to a mislocalization of class I crossovers (COs) and correlated with strong synapsis defects. Dwarf plants, highly branched, with small crinkled leaves, small flowers and short fruits, symptoms of fertility defects.</text>
</comment>
<comment type="similarity">
    <text evidence="10">Belongs to the ubiquitin-activating E1 family. ULA1 subfamily.</text>
</comment>
<accession>P42744</accession>
<organism>
    <name type="scientific">Arabidopsis thaliana</name>
    <name type="common">Mouse-ear cress</name>
    <dbReference type="NCBI Taxonomy" id="3702"/>
    <lineage>
        <taxon>Eukaryota</taxon>
        <taxon>Viridiplantae</taxon>
        <taxon>Streptophyta</taxon>
        <taxon>Embryophyta</taxon>
        <taxon>Tracheophyta</taxon>
        <taxon>Spermatophyta</taxon>
        <taxon>Magnoliopsida</taxon>
        <taxon>eudicotyledons</taxon>
        <taxon>Gunneridae</taxon>
        <taxon>Pentapetalae</taxon>
        <taxon>rosids</taxon>
        <taxon>malvids</taxon>
        <taxon>Brassicales</taxon>
        <taxon>Brassicaceae</taxon>
        <taxon>Camelineae</taxon>
        <taxon>Arabidopsis</taxon>
    </lineage>
</organism>